<keyword id="KW-1015">Disulfide bond</keyword>
<keyword id="KW-0393">Immunoglobulin domain</keyword>
<keyword id="KW-0472">Membrane</keyword>
<keyword id="KW-1185">Reference proteome</keyword>
<keyword id="KW-0732">Signal</keyword>
<keyword id="KW-0812">Transmembrane</keyword>
<keyword id="KW-1133">Transmembrane helix</keyword>
<gene>
    <name type="primary">vstm2b</name>
</gene>
<protein>
    <recommendedName>
        <fullName>V-set and transmembrane domain-containing protein 2B</fullName>
    </recommendedName>
</protein>
<dbReference type="EMBL" id="BC121271">
    <property type="protein sequence ID" value="AAI21272.1"/>
    <property type="molecule type" value="mRNA"/>
</dbReference>
<dbReference type="RefSeq" id="NP_001072789.1">
    <property type="nucleotide sequence ID" value="NM_001079321.1"/>
</dbReference>
<dbReference type="SMR" id="Q0IJ12"/>
<dbReference type="FunCoup" id="Q0IJ12">
    <property type="interactions" value="241"/>
</dbReference>
<dbReference type="PaxDb" id="8364-ENSXETP00000062844"/>
<dbReference type="DNASU" id="780250"/>
<dbReference type="GeneID" id="780250"/>
<dbReference type="KEGG" id="xtr:780250"/>
<dbReference type="AGR" id="Xenbase:XB-GENE-947810"/>
<dbReference type="CTD" id="342865"/>
<dbReference type="Xenbase" id="XB-GENE-947810">
    <property type="gene designation" value="vstm2b"/>
</dbReference>
<dbReference type="eggNOG" id="ENOG502QSS5">
    <property type="taxonomic scope" value="Eukaryota"/>
</dbReference>
<dbReference type="HOGENOM" id="CLU_081009_0_0_1"/>
<dbReference type="InParanoid" id="Q0IJ12"/>
<dbReference type="OrthoDB" id="9942060at2759"/>
<dbReference type="TreeFam" id="TF331739"/>
<dbReference type="Proteomes" id="UP000008143">
    <property type="component" value="Chromosome 4"/>
</dbReference>
<dbReference type="GO" id="GO:0016020">
    <property type="term" value="C:membrane"/>
    <property type="evidence" value="ECO:0007669"/>
    <property type="project" value="UniProtKB-SubCell"/>
</dbReference>
<dbReference type="FunFam" id="2.60.40.10:FF:000804">
    <property type="entry name" value="V-set and transmembrane domain containing 2B"/>
    <property type="match status" value="1"/>
</dbReference>
<dbReference type="Gene3D" id="2.60.40.10">
    <property type="entry name" value="Immunoglobulins"/>
    <property type="match status" value="1"/>
</dbReference>
<dbReference type="InterPro" id="IPR007110">
    <property type="entry name" value="Ig-like_dom"/>
</dbReference>
<dbReference type="InterPro" id="IPR036179">
    <property type="entry name" value="Ig-like_dom_sf"/>
</dbReference>
<dbReference type="InterPro" id="IPR013783">
    <property type="entry name" value="Ig-like_fold"/>
</dbReference>
<dbReference type="InterPro" id="IPR003599">
    <property type="entry name" value="Ig_sub"/>
</dbReference>
<dbReference type="InterPro" id="IPR013106">
    <property type="entry name" value="Ig_V-set"/>
</dbReference>
<dbReference type="InterPro" id="IPR051102">
    <property type="entry name" value="IgSF_V-set/TM_domain"/>
</dbReference>
<dbReference type="PANTHER" id="PTHR12207">
    <property type="entry name" value="V-SET AND TRANSMEMBRANE DOMAIN-CONTAINING PROTEIN"/>
    <property type="match status" value="1"/>
</dbReference>
<dbReference type="PANTHER" id="PTHR12207:SF27">
    <property type="entry name" value="V-SET AND TRANSMEMBRANE DOMAIN-CONTAINING PROTEIN 2B"/>
    <property type="match status" value="1"/>
</dbReference>
<dbReference type="Pfam" id="PF07686">
    <property type="entry name" value="V-set"/>
    <property type="match status" value="1"/>
</dbReference>
<dbReference type="SMART" id="SM00409">
    <property type="entry name" value="IG"/>
    <property type="match status" value="1"/>
</dbReference>
<dbReference type="SUPFAM" id="SSF48726">
    <property type="entry name" value="Immunoglobulin"/>
    <property type="match status" value="1"/>
</dbReference>
<dbReference type="PROSITE" id="PS50835">
    <property type="entry name" value="IG_LIKE"/>
    <property type="match status" value="1"/>
</dbReference>
<comment type="subcellular location">
    <subcellularLocation>
        <location evidence="4">Membrane</location>
        <topology evidence="4">Single-pass type I membrane protein</topology>
    </subcellularLocation>
</comment>
<reference key="1">
    <citation type="submission" date="2006-08" db="EMBL/GenBank/DDBJ databases">
        <authorList>
            <consortium name="NIH - Xenopus Gene Collection (XGC) project"/>
        </authorList>
    </citation>
    <scope>NUCLEOTIDE SEQUENCE [LARGE SCALE MRNA]</scope>
    <source>
        <tissue>Brain</tissue>
    </source>
</reference>
<name>VTM2B_XENTR</name>
<proteinExistence type="evidence at transcript level"/>
<organism>
    <name type="scientific">Xenopus tropicalis</name>
    <name type="common">Western clawed frog</name>
    <name type="synonym">Silurana tropicalis</name>
    <dbReference type="NCBI Taxonomy" id="8364"/>
    <lineage>
        <taxon>Eukaryota</taxon>
        <taxon>Metazoa</taxon>
        <taxon>Chordata</taxon>
        <taxon>Craniata</taxon>
        <taxon>Vertebrata</taxon>
        <taxon>Euteleostomi</taxon>
        <taxon>Amphibia</taxon>
        <taxon>Batrachia</taxon>
        <taxon>Anura</taxon>
        <taxon>Pipoidea</taxon>
        <taxon>Pipidae</taxon>
        <taxon>Xenopodinae</taxon>
        <taxon>Xenopus</taxon>
        <taxon>Silurana</taxon>
    </lineage>
</organism>
<accession>Q0IJ12</accession>
<feature type="signal peptide" evidence="1">
    <location>
        <begin position="1"/>
        <end position="25"/>
    </location>
</feature>
<feature type="chain" id="PRO_0000319945" description="V-set and transmembrane domain-containing protein 2B">
    <location>
        <begin position="26"/>
        <end position="251"/>
    </location>
</feature>
<feature type="topological domain" description="Extracellular" evidence="1">
    <location>
        <begin position="26"/>
        <end position="226"/>
    </location>
</feature>
<feature type="transmembrane region" description="Helical" evidence="1">
    <location>
        <begin position="227"/>
        <end position="247"/>
    </location>
</feature>
<feature type="topological domain" description="Cytoplasmic" evidence="1">
    <location>
        <begin position="248"/>
        <end position="251"/>
    </location>
</feature>
<feature type="domain" description="Ig-like V-type">
    <location>
        <begin position="26"/>
        <end position="142"/>
    </location>
</feature>
<feature type="region of interest" description="Disordered" evidence="3">
    <location>
        <begin position="157"/>
        <end position="213"/>
    </location>
</feature>
<feature type="compositionally biased region" description="Low complexity" evidence="3">
    <location>
        <begin position="166"/>
        <end position="177"/>
    </location>
</feature>
<feature type="compositionally biased region" description="Low complexity" evidence="3">
    <location>
        <begin position="195"/>
        <end position="213"/>
    </location>
</feature>
<feature type="disulfide bond" evidence="2">
    <location>
        <begin position="46"/>
        <end position="125"/>
    </location>
</feature>
<evidence type="ECO:0000255" key="1"/>
<evidence type="ECO:0000255" key="2">
    <source>
        <dbReference type="PROSITE-ProRule" id="PRU00114"/>
    </source>
</evidence>
<evidence type="ECO:0000256" key="3">
    <source>
        <dbReference type="SAM" id="MobiDB-lite"/>
    </source>
</evidence>
<evidence type="ECO:0000305" key="4"/>
<sequence length="251" mass="27548">MEKQGLFSALCYLMLNTPLLFSVNATFTEVPKDVTIREGEDIEMPCAFRASGSTSFSLEIQWWYLKEATREMAQELAISAPGNRNKVTTSKDATKISTVRVQGNDISHRLRLSNVKKQDEGVYECRVSDFGDDETQEHKAQAMLRVISRFSPPDMQAAEAVSHIQSSGPRRNNPSSRATPEPGNKRAVPPAENLAPSLSTAASSSASPAPGKAAILRQQHGSGTGPIFANDPALYMFLLIFHQLVYLLLNH</sequence>